<protein>
    <recommendedName>
        <fullName evidence="1">Small ribosomal subunit protein uS13</fullName>
    </recommendedName>
    <alternativeName>
        <fullName evidence="3">30S ribosomal protein S13</fullName>
    </alternativeName>
</protein>
<gene>
    <name evidence="1" type="primary">rps13</name>
    <name type="ordered locus">MJ0189</name>
</gene>
<comment type="function">
    <text evidence="1">Located at the top of the head of the 30S subunit, it contacts several helices of the 16S rRNA. In the 70S ribosome it contacts the 23S rRNA (bridge B1a) and protein L5 of the 50S subunit (bridge B1b), connecting the 2 subunits; these bridges are implicated in subunit movement.</text>
</comment>
<comment type="subunit">
    <text evidence="1">Part of the 30S ribosomal subunit. Forms a loose heterodimer with protein S19. Forms two bridges to the 50S subunit in the 70S ribosome.</text>
</comment>
<comment type="similarity">
    <text evidence="1">Belongs to the universal ribosomal protein uS13 family.</text>
</comment>
<accession>P54019</accession>
<organism>
    <name type="scientific">Methanocaldococcus jannaschii (strain ATCC 43067 / DSM 2661 / JAL-1 / JCM 10045 / NBRC 100440)</name>
    <name type="common">Methanococcus jannaschii</name>
    <dbReference type="NCBI Taxonomy" id="243232"/>
    <lineage>
        <taxon>Archaea</taxon>
        <taxon>Methanobacteriati</taxon>
        <taxon>Methanobacteriota</taxon>
        <taxon>Methanomada group</taxon>
        <taxon>Methanococci</taxon>
        <taxon>Methanococcales</taxon>
        <taxon>Methanocaldococcaceae</taxon>
        <taxon>Methanocaldococcus</taxon>
    </lineage>
</organism>
<name>RS13_METJA</name>
<feature type="chain" id="PRO_0000132181" description="Small ribosomal subunit protein uS13">
    <location>
        <begin position="1"/>
        <end position="150"/>
    </location>
</feature>
<feature type="region of interest" description="Disordered" evidence="2">
    <location>
        <begin position="131"/>
        <end position="150"/>
    </location>
</feature>
<dbReference type="EMBL" id="L77117">
    <property type="protein sequence ID" value="AAB98169.1"/>
    <property type="molecule type" value="Genomic_DNA"/>
</dbReference>
<dbReference type="RefSeq" id="WP_010869684.1">
    <property type="nucleotide sequence ID" value="NC_000909.1"/>
</dbReference>
<dbReference type="SMR" id="P54019"/>
<dbReference type="FunCoup" id="P54019">
    <property type="interactions" value="196"/>
</dbReference>
<dbReference type="STRING" id="243232.MJ_0189"/>
<dbReference type="PaxDb" id="243232-MJ_0189"/>
<dbReference type="EnsemblBacteria" id="AAB98169">
    <property type="protein sequence ID" value="AAB98169"/>
    <property type="gene ID" value="MJ_0189"/>
</dbReference>
<dbReference type="GeneID" id="1451037"/>
<dbReference type="KEGG" id="mja:MJ_0189"/>
<dbReference type="eggNOG" id="arCOG01722">
    <property type="taxonomic scope" value="Archaea"/>
</dbReference>
<dbReference type="HOGENOM" id="CLU_103849_0_0_2"/>
<dbReference type="InParanoid" id="P54019"/>
<dbReference type="OrthoDB" id="372127at2157"/>
<dbReference type="PhylomeDB" id="P54019"/>
<dbReference type="Proteomes" id="UP000000805">
    <property type="component" value="Chromosome"/>
</dbReference>
<dbReference type="GO" id="GO:0005829">
    <property type="term" value="C:cytosol"/>
    <property type="evidence" value="ECO:0000318"/>
    <property type="project" value="GO_Central"/>
</dbReference>
<dbReference type="GO" id="GO:0015935">
    <property type="term" value="C:small ribosomal subunit"/>
    <property type="evidence" value="ECO:0000318"/>
    <property type="project" value="GO_Central"/>
</dbReference>
<dbReference type="GO" id="GO:0019843">
    <property type="term" value="F:rRNA binding"/>
    <property type="evidence" value="ECO:0007669"/>
    <property type="project" value="UniProtKB-UniRule"/>
</dbReference>
<dbReference type="GO" id="GO:0003735">
    <property type="term" value="F:structural constituent of ribosome"/>
    <property type="evidence" value="ECO:0007669"/>
    <property type="project" value="InterPro"/>
</dbReference>
<dbReference type="GO" id="GO:0006412">
    <property type="term" value="P:translation"/>
    <property type="evidence" value="ECO:0007669"/>
    <property type="project" value="UniProtKB-UniRule"/>
</dbReference>
<dbReference type="FunFam" id="1.10.8.50:FF:000001">
    <property type="entry name" value="30S ribosomal protein S13"/>
    <property type="match status" value="1"/>
</dbReference>
<dbReference type="FunFam" id="4.10.910.10:FF:000002">
    <property type="entry name" value="40S ribosomal protein S18"/>
    <property type="match status" value="1"/>
</dbReference>
<dbReference type="Gene3D" id="1.10.8.50">
    <property type="match status" value="1"/>
</dbReference>
<dbReference type="Gene3D" id="4.10.910.10">
    <property type="entry name" value="30s ribosomal protein s13, domain 2"/>
    <property type="match status" value="1"/>
</dbReference>
<dbReference type="HAMAP" id="MF_01315">
    <property type="entry name" value="Ribosomal_uS13"/>
    <property type="match status" value="1"/>
</dbReference>
<dbReference type="InterPro" id="IPR027437">
    <property type="entry name" value="Rbsml_uS13_C"/>
</dbReference>
<dbReference type="InterPro" id="IPR001892">
    <property type="entry name" value="Ribosomal_uS13"/>
</dbReference>
<dbReference type="InterPro" id="IPR010979">
    <property type="entry name" value="Ribosomal_uS13-like_H2TH"/>
</dbReference>
<dbReference type="InterPro" id="IPR019977">
    <property type="entry name" value="Ribosomal_uS13_archaeal"/>
</dbReference>
<dbReference type="InterPro" id="IPR018269">
    <property type="entry name" value="Ribosomal_uS13_CS"/>
</dbReference>
<dbReference type="NCBIfam" id="NF003140">
    <property type="entry name" value="PRK04053.1"/>
    <property type="match status" value="1"/>
</dbReference>
<dbReference type="NCBIfam" id="TIGR03629">
    <property type="entry name" value="uS13_arch"/>
    <property type="match status" value="1"/>
</dbReference>
<dbReference type="PANTHER" id="PTHR10871">
    <property type="entry name" value="30S RIBOSOMAL PROTEIN S13/40S RIBOSOMAL PROTEIN S18"/>
    <property type="match status" value="1"/>
</dbReference>
<dbReference type="PANTHER" id="PTHR10871:SF3">
    <property type="entry name" value="SMALL RIBOSOMAL SUBUNIT PROTEIN US13"/>
    <property type="match status" value="1"/>
</dbReference>
<dbReference type="Pfam" id="PF00416">
    <property type="entry name" value="Ribosomal_S13"/>
    <property type="match status" value="1"/>
</dbReference>
<dbReference type="PIRSF" id="PIRSF002134">
    <property type="entry name" value="Ribosomal_S13"/>
    <property type="match status" value="1"/>
</dbReference>
<dbReference type="SUPFAM" id="SSF46946">
    <property type="entry name" value="S13-like H2TH domain"/>
    <property type="match status" value="1"/>
</dbReference>
<dbReference type="PROSITE" id="PS00646">
    <property type="entry name" value="RIBOSOMAL_S13_1"/>
    <property type="match status" value="1"/>
</dbReference>
<dbReference type="PROSITE" id="PS50159">
    <property type="entry name" value="RIBOSOMAL_S13_2"/>
    <property type="match status" value="1"/>
</dbReference>
<reference key="1">
    <citation type="journal article" date="1996" name="Science">
        <title>Complete genome sequence of the methanogenic archaeon, Methanococcus jannaschii.</title>
        <authorList>
            <person name="Bult C.J."/>
            <person name="White O."/>
            <person name="Olsen G.J."/>
            <person name="Zhou L."/>
            <person name="Fleischmann R.D."/>
            <person name="Sutton G.G."/>
            <person name="Blake J.A."/>
            <person name="FitzGerald L.M."/>
            <person name="Clayton R.A."/>
            <person name="Gocayne J.D."/>
            <person name="Kerlavage A.R."/>
            <person name="Dougherty B.A."/>
            <person name="Tomb J.-F."/>
            <person name="Adams M.D."/>
            <person name="Reich C.I."/>
            <person name="Overbeek R."/>
            <person name="Kirkness E.F."/>
            <person name="Weinstock K.G."/>
            <person name="Merrick J.M."/>
            <person name="Glodek A."/>
            <person name="Scott J.L."/>
            <person name="Geoghagen N.S.M."/>
            <person name="Weidman J.F."/>
            <person name="Fuhrmann J.L."/>
            <person name="Nguyen D."/>
            <person name="Utterback T.R."/>
            <person name="Kelley J.M."/>
            <person name="Peterson J.D."/>
            <person name="Sadow P.W."/>
            <person name="Hanna M.C."/>
            <person name="Cotton M.D."/>
            <person name="Roberts K.M."/>
            <person name="Hurst M.A."/>
            <person name="Kaine B.P."/>
            <person name="Borodovsky M."/>
            <person name="Klenk H.-P."/>
            <person name="Fraser C.M."/>
            <person name="Smith H.O."/>
            <person name="Woese C.R."/>
            <person name="Venter J.C."/>
        </authorList>
    </citation>
    <scope>NUCLEOTIDE SEQUENCE [LARGE SCALE GENOMIC DNA]</scope>
    <source>
        <strain>ATCC 43067 / DSM 2661 / JAL-1 / JCM 10045 / NBRC 100440</strain>
    </source>
</reference>
<keyword id="KW-1185">Reference proteome</keyword>
<keyword id="KW-0687">Ribonucleoprotein</keyword>
<keyword id="KW-0689">Ribosomal protein</keyword>
<keyword id="KW-0694">RNA-binding</keyword>
<keyword id="KW-0699">rRNA-binding</keyword>
<sequence>MQNSEFKYLIRVSRTDLDGNKKLIMALQDIYGVGEAMARAIVRVAKLDPNKLAGYLTEEEVKKIEEVLADPAKFGIPSWMFNRRKDYVTGEDKHVIESDLMIIKQEDINRLKRIRCYRGIRHELGLPCRGQRTKSTFRRGPTVGVSRRKK</sequence>
<evidence type="ECO:0000255" key="1">
    <source>
        <dbReference type="HAMAP-Rule" id="MF_01315"/>
    </source>
</evidence>
<evidence type="ECO:0000256" key="2">
    <source>
        <dbReference type="SAM" id="MobiDB-lite"/>
    </source>
</evidence>
<evidence type="ECO:0000305" key="3"/>
<proteinExistence type="inferred from homology"/>